<keyword id="KW-0240">DNA-directed RNA polymerase</keyword>
<keyword id="KW-0548">Nucleotidyltransferase</keyword>
<keyword id="KW-1185">Reference proteome</keyword>
<keyword id="KW-0804">Transcription</keyword>
<keyword id="KW-0808">Transferase</keyword>
<name>RPOB_PROMA</name>
<gene>
    <name evidence="1" type="primary">rpoB</name>
    <name type="ordered locus">Pro_1640</name>
</gene>
<dbReference type="EC" id="2.7.7.6" evidence="1"/>
<dbReference type="EMBL" id="AE017126">
    <property type="protein sequence ID" value="AAQ00684.1"/>
    <property type="molecule type" value="Genomic_DNA"/>
</dbReference>
<dbReference type="RefSeq" id="NP_876031.1">
    <property type="nucleotide sequence ID" value="NC_005042.1"/>
</dbReference>
<dbReference type="RefSeq" id="WP_011125790.1">
    <property type="nucleotide sequence ID" value="NC_005042.1"/>
</dbReference>
<dbReference type="SMR" id="Q7VA29"/>
<dbReference type="STRING" id="167539.Pro_1640"/>
<dbReference type="EnsemblBacteria" id="AAQ00684">
    <property type="protein sequence ID" value="AAQ00684"/>
    <property type="gene ID" value="Pro_1640"/>
</dbReference>
<dbReference type="KEGG" id="pma:Pro_1640"/>
<dbReference type="PATRIC" id="fig|167539.5.peg.1734"/>
<dbReference type="eggNOG" id="COG0085">
    <property type="taxonomic scope" value="Bacteria"/>
</dbReference>
<dbReference type="HOGENOM" id="CLU_000524_4_1_3"/>
<dbReference type="OrthoDB" id="9803954at2"/>
<dbReference type="Proteomes" id="UP000001420">
    <property type="component" value="Chromosome"/>
</dbReference>
<dbReference type="GO" id="GO:0000428">
    <property type="term" value="C:DNA-directed RNA polymerase complex"/>
    <property type="evidence" value="ECO:0007669"/>
    <property type="project" value="UniProtKB-KW"/>
</dbReference>
<dbReference type="GO" id="GO:0003677">
    <property type="term" value="F:DNA binding"/>
    <property type="evidence" value="ECO:0007669"/>
    <property type="project" value="UniProtKB-UniRule"/>
</dbReference>
<dbReference type="GO" id="GO:0003899">
    <property type="term" value="F:DNA-directed RNA polymerase activity"/>
    <property type="evidence" value="ECO:0007669"/>
    <property type="project" value="UniProtKB-UniRule"/>
</dbReference>
<dbReference type="GO" id="GO:0032549">
    <property type="term" value="F:ribonucleoside binding"/>
    <property type="evidence" value="ECO:0007669"/>
    <property type="project" value="InterPro"/>
</dbReference>
<dbReference type="GO" id="GO:0006351">
    <property type="term" value="P:DNA-templated transcription"/>
    <property type="evidence" value="ECO:0007669"/>
    <property type="project" value="UniProtKB-UniRule"/>
</dbReference>
<dbReference type="CDD" id="cd00653">
    <property type="entry name" value="RNA_pol_B_RPB2"/>
    <property type="match status" value="1"/>
</dbReference>
<dbReference type="FunFam" id="3.90.1800.10:FF:000001">
    <property type="entry name" value="DNA-directed RNA polymerase subunit beta"/>
    <property type="match status" value="1"/>
</dbReference>
<dbReference type="Gene3D" id="2.40.50.100">
    <property type="match status" value="1"/>
</dbReference>
<dbReference type="Gene3D" id="2.40.50.150">
    <property type="match status" value="1"/>
</dbReference>
<dbReference type="Gene3D" id="3.90.1100.10">
    <property type="match status" value="1"/>
</dbReference>
<dbReference type="Gene3D" id="2.30.150.10">
    <property type="entry name" value="DNA-directed RNA polymerase, beta subunit, external 1 domain"/>
    <property type="match status" value="1"/>
</dbReference>
<dbReference type="Gene3D" id="2.40.270.10">
    <property type="entry name" value="DNA-directed RNA polymerase, subunit 2, domain 6"/>
    <property type="match status" value="1"/>
</dbReference>
<dbReference type="Gene3D" id="3.90.1800.10">
    <property type="entry name" value="RNA polymerase alpha subunit dimerisation domain"/>
    <property type="match status" value="1"/>
</dbReference>
<dbReference type="Gene3D" id="3.90.1110.10">
    <property type="entry name" value="RNA polymerase Rpb2, domain 2"/>
    <property type="match status" value="1"/>
</dbReference>
<dbReference type="HAMAP" id="MF_01321">
    <property type="entry name" value="RNApol_bact_RpoB"/>
    <property type="match status" value="1"/>
</dbReference>
<dbReference type="InterPro" id="IPR042107">
    <property type="entry name" value="DNA-dir_RNA_pol_bsu_ext_1_sf"/>
</dbReference>
<dbReference type="InterPro" id="IPR019462">
    <property type="entry name" value="DNA-dir_RNA_pol_bsu_external_1"/>
</dbReference>
<dbReference type="InterPro" id="IPR015712">
    <property type="entry name" value="DNA-dir_RNA_pol_su2"/>
</dbReference>
<dbReference type="InterPro" id="IPR007120">
    <property type="entry name" value="DNA-dir_RNAP_su2_dom"/>
</dbReference>
<dbReference type="InterPro" id="IPR037033">
    <property type="entry name" value="DNA-dir_RNAP_su2_hyb_sf"/>
</dbReference>
<dbReference type="InterPro" id="IPR010243">
    <property type="entry name" value="RNA_pol_bsu_bac"/>
</dbReference>
<dbReference type="InterPro" id="IPR007121">
    <property type="entry name" value="RNA_pol_bsu_CS"/>
</dbReference>
<dbReference type="InterPro" id="IPR007644">
    <property type="entry name" value="RNA_pol_bsu_protrusion"/>
</dbReference>
<dbReference type="InterPro" id="IPR007642">
    <property type="entry name" value="RNA_pol_Rpb2_2"/>
</dbReference>
<dbReference type="InterPro" id="IPR037034">
    <property type="entry name" value="RNA_pol_Rpb2_2_sf"/>
</dbReference>
<dbReference type="InterPro" id="IPR007645">
    <property type="entry name" value="RNA_pol_Rpb2_3"/>
</dbReference>
<dbReference type="InterPro" id="IPR007641">
    <property type="entry name" value="RNA_pol_Rpb2_7"/>
</dbReference>
<dbReference type="InterPro" id="IPR014724">
    <property type="entry name" value="RNA_pol_RPB2_OB-fold"/>
</dbReference>
<dbReference type="NCBIfam" id="NF001616">
    <property type="entry name" value="PRK00405.1"/>
    <property type="match status" value="1"/>
</dbReference>
<dbReference type="NCBIfam" id="TIGR02013">
    <property type="entry name" value="rpoB"/>
    <property type="match status" value="1"/>
</dbReference>
<dbReference type="PANTHER" id="PTHR20856">
    <property type="entry name" value="DNA-DIRECTED RNA POLYMERASE I SUBUNIT 2"/>
    <property type="match status" value="1"/>
</dbReference>
<dbReference type="Pfam" id="PF04563">
    <property type="entry name" value="RNA_pol_Rpb2_1"/>
    <property type="match status" value="1"/>
</dbReference>
<dbReference type="Pfam" id="PF04561">
    <property type="entry name" value="RNA_pol_Rpb2_2"/>
    <property type="match status" value="1"/>
</dbReference>
<dbReference type="Pfam" id="PF04565">
    <property type="entry name" value="RNA_pol_Rpb2_3"/>
    <property type="match status" value="1"/>
</dbReference>
<dbReference type="Pfam" id="PF10385">
    <property type="entry name" value="RNA_pol_Rpb2_45"/>
    <property type="match status" value="1"/>
</dbReference>
<dbReference type="Pfam" id="PF00562">
    <property type="entry name" value="RNA_pol_Rpb2_6"/>
    <property type="match status" value="1"/>
</dbReference>
<dbReference type="Pfam" id="PF04560">
    <property type="entry name" value="RNA_pol_Rpb2_7"/>
    <property type="match status" value="1"/>
</dbReference>
<dbReference type="SUPFAM" id="SSF64484">
    <property type="entry name" value="beta and beta-prime subunits of DNA dependent RNA-polymerase"/>
    <property type="match status" value="1"/>
</dbReference>
<dbReference type="PROSITE" id="PS01166">
    <property type="entry name" value="RNA_POL_BETA"/>
    <property type="match status" value="1"/>
</dbReference>
<proteinExistence type="inferred from homology"/>
<comment type="function">
    <text evidence="1">DNA-dependent RNA polymerase catalyzes the transcription of DNA into RNA using the four ribonucleoside triphosphates as substrates.</text>
</comment>
<comment type="catalytic activity">
    <reaction evidence="1">
        <text>RNA(n) + a ribonucleoside 5'-triphosphate = RNA(n+1) + diphosphate</text>
        <dbReference type="Rhea" id="RHEA:21248"/>
        <dbReference type="Rhea" id="RHEA-COMP:14527"/>
        <dbReference type="Rhea" id="RHEA-COMP:17342"/>
        <dbReference type="ChEBI" id="CHEBI:33019"/>
        <dbReference type="ChEBI" id="CHEBI:61557"/>
        <dbReference type="ChEBI" id="CHEBI:140395"/>
        <dbReference type="EC" id="2.7.7.6"/>
    </reaction>
</comment>
<comment type="subunit">
    <text evidence="1">In cyanobacteria the RNAP catalytic core is composed of 2 alpha, 1 beta, 1 beta', 1 gamma and 1 omega subunit. When a sigma factor is associated with the core the holoenzyme is formed, which can initiate transcription.</text>
</comment>
<comment type="similarity">
    <text evidence="1">Belongs to the RNA polymerase beta chain family.</text>
</comment>
<protein>
    <recommendedName>
        <fullName evidence="1">DNA-directed RNA polymerase subunit beta</fullName>
        <shortName evidence="1">RNAP subunit beta</shortName>
        <ecNumber evidence="1">2.7.7.6</ecNumber>
    </recommendedName>
    <alternativeName>
        <fullName evidence="1">RNA polymerase subunit beta</fullName>
    </alternativeName>
    <alternativeName>
        <fullName evidence="1">Transcriptase subunit beta</fullName>
    </alternativeName>
</protein>
<feature type="chain" id="PRO_0000047937" description="DNA-directed RNA polymerase subunit beta">
    <location>
        <begin position="1"/>
        <end position="1096"/>
    </location>
</feature>
<feature type="region of interest" description="Disordered" evidence="2">
    <location>
        <begin position="1069"/>
        <end position="1096"/>
    </location>
</feature>
<sequence length="1096" mass="122549">MSRSAIQVAKTATYLPDLVEVQRASFKWFLEKGLIEELENFSPITDYTGKLELHFIGSEYRLKRPRHDVEEAKRRDATFASQMYVTCRLVNKETGEIKEQEVFIGELPLMTERGTFIINGAERVIVNQIVRSPGVYFKDEQDKNGRRTYNASVIPNRGAWLKFETDKNDLLHVRVDKTRKINAHVLMRAMGLSDNDVIDKLRHPEYYKKSIQAADDEGISSEDQALLELYKKLRPGEPPSVSGGQQLLQSRFFDAKRYDLGRVGRYKINKKLRLTIPDSVRTLTHEDVLSTIDYLINLELDVGGATLDDIDHLGNRRVRSVGELLQNQVRVGLNRLERIIKERMTVGETDSLTPAQLVNPKPLVAAIKEFFGSSQLSQFMDQTNPLAELTHKRRISALGPGGLTRERAGFAVRDIHPSHYGRLCPIETPEGPNAGLINSLATHARVNSYGFIETPFWKVEEGRVIKVGDPIYLSADLEDECRVAPGDVATDKDGMILADLIPVRYRQDFEKVPPAQVDYVQLSPVQVISVATSLIPFVEHDDANRALMGSNMQRQAVPLLRPERPLVGTGLETQVARDSGMVPISQVNGTVTYVDANSIVVTDDEGGEHLHELQKYQRSNQDTCLNQRPIVRNGDKVIIGQVLADGSACEGGEIALGQNVLIAYMPWEGYNYEDAILVSERLVKDDLYTSVHIEKYEIEARQTKLGPEEITREIPNIAEESLGNLDEMGIIRVGAFVESGDILVGKVTPKGESDQPPEEKLLRAIFGEKARDVRDNSLRVPSTEKGRVVDVRIYTREQGDELPPGANMVVRVYVAQRRKIQVGDKMAGRHGNKGIISRILPREDMPYLPDGTPVDIVLNPLGVPSRMNVGQVFELLMGWAAANLDCRVKVVPFDEMYGAEKSYETVQLYLKEAAKQPGKEWVFNPDDPGKLLLRDGRTGEAFDQPVAVGYSHFLKLVHLVDDKIHARSTGPYSLVTQQPLGGKAQQGGQRLGEMEVWALEAYGAAYTLQELLTVKSDDMQGRNEALNAIVKGKPIPRPGTPESFKVLMRELQSLGLDIGVYTDEGKEVDLMQDVNPRRSTPSRPTYESLGSDYQED</sequence>
<organism>
    <name type="scientific">Prochlorococcus marinus (strain SARG / CCMP1375 / SS120)</name>
    <dbReference type="NCBI Taxonomy" id="167539"/>
    <lineage>
        <taxon>Bacteria</taxon>
        <taxon>Bacillati</taxon>
        <taxon>Cyanobacteriota</taxon>
        <taxon>Cyanophyceae</taxon>
        <taxon>Synechococcales</taxon>
        <taxon>Prochlorococcaceae</taxon>
        <taxon>Prochlorococcus</taxon>
    </lineage>
</organism>
<evidence type="ECO:0000255" key="1">
    <source>
        <dbReference type="HAMAP-Rule" id="MF_01321"/>
    </source>
</evidence>
<evidence type="ECO:0000256" key="2">
    <source>
        <dbReference type="SAM" id="MobiDB-lite"/>
    </source>
</evidence>
<reference key="1">
    <citation type="journal article" date="2003" name="Proc. Natl. Acad. Sci. U.S.A.">
        <title>Genome sequence of the cyanobacterium Prochlorococcus marinus SS120, a nearly minimal oxyphototrophic genome.</title>
        <authorList>
            <person name="Dufresne A."/>
            <person name="Salanoubat M."/>
            <person name="Partensky F."/>
            <person name="Artiguenave F."/>
            <person name="Axmann I.M."/>
            <person name="Barbe V."/>
            <person name="Duprat S."/>
            <person name="Galperin M.Y."/>
            <person name="Koonin E.V."/>
            <person name="Le Gall F."/>
            <person name="Makarova K.S."/>
            <person name="Ostrowski M."/>
            <person name="Oztas S."/>
            <person name="Robert C."/>
            <person name="Rogozin I.B."/>
            <person name="Scanlan D.J."/>
            <person name="Tandeau de Marsac N."/>
            <person name="Weissenbach J."/>
            <person name="Wincker P."/>
            <person name="Wolf Y.I."/>
            <person name="Hess W.R."/>
        </authorList>
    </citation>
    <scope>NUCLEOTIDE SEQUENCE [LARGE SCALE GENOMIC DNA]</scope>
    <source>
        <strain>SARG / CCMP1375 / SS120</strain>
    </source>
</reference>
<accession>Q7VA29</accession>